<gene>
    <name evidence="6 10" type="primary">NINJ2</name>
</gene>
<evidence type="ECO:0000256" key="1">
    <source>
        <dbReference type="SAM" id="MobiDB-lite"/>
    </source>
</evidence>
<evidence type="ECO:0000269" key="2">
    <source>
    </source>
</evidence>
<evidence type="ECO:0000269" key="3">
    <source>
    </source>
</evidence>
<evidence type="ECO:0000269" key="4">
    <source>
    </source>
</evidence>
<evidence type="ECO:0000269" key="5">
    <source>
    </source>
</evidence>
<evidence type="ECO:0000303" key="6">
    <source>
    </source>
</evidence>
<evidence type="ECO:0000305" key="7"/>
<evidence type="ECO:0000305" key="8">
    <source>
    </source>
</evidence>
<evidence type="ECO:0000305" key="9">
    <source>
    </source>
</evidence>
<evidence type="ECO:0000312" key="10">
    <source>
        <dbReference type="HGNC" id="HGNC:7825"/>
    </source>
</evidence>
<evidence type="ECO:0007744" key="11">
    <source>
        <dbReference type="PDB" id="8SZB"/>
    </source>
</evidence>
<evidence type="ECO:0007829" key="12">
    <source>
        <dbReference type="PDB" id="8SZB"/>
    </source>
</evidence>
<organism>
    <name type="scientific">Homo sapiens</name>
    <name type="common">Human</name>
    <dbReference type="NCBI Taxonomy" id="9606"/>
    <lineage>
        <taxon>Eukaryota</taxon>
        <taxon>Metazoa</taxon>
        <taxon>Chordata</taxon>
        <taxon>Craniata</taxon>
        <taxon>Vertebrata</taxon>
        <taxon>Euteleostomi</taxon>
        <taxon>Mammalia</taxon>
        <taxon>Eutheria</taxon>
        <taxon>Euarchontoglires</taxon>
        <taxon>Primates</taxon>
        <taxon>Haplorrhini</taxon>
        <taxon>Catarrhini</taxon>
        <taxon>Hominidae</taxon>
        <taxon>Homo</taxon>
    </lineage>
</organism>
<comment type="function">
    <text evidence="2 3 4 5">Its role in unclear (PubMed:33472215, PubMed:38614101, PubMed:39667936). In contrast to NINJ1 paralog, does not mediate plasma membrane rupture (cytolysis) downstream of necroptotic and pyroptotic programmed cell death (PubMed:33472215, PubMed:38614101, PubMed:39667936). While it is able to oligomerize and form filaments, filaments are curved toward the intracellular space, preventing circularization to mediate plasma membrane rupture (PubMed:39667936). May act as a homophilic transmembrane adhesion molecule involved in nerve regeneration (PubMed:10627596). Promotes axonal growth (PubMed:10627596).</text>
</comment>
<comment type="subunit">
    <text evidence="4 5">Homooligomer; in response to stimuli, homooligomerizes into filaments (PubMed:38614101, PubMed:39667936). In contrast to NINJ1, the filament is curved toward the intracellular space, preventing its circularization on a relatively flat membrane to mediate plasma membrane rupture: curvature is caused by cholesterol-binding at the cytoplasmic leaflet (PubMed:39667936).</text>
</comment>
<comment type="interaction">
    <interactant intactId="EBI-10317425">
        <id>Q9NZG7</id>
    </interactant>
    <interactant intactId="EBI-19125216">
        <id>Q86WK6</id>
        <label>AMIGO1</label>
    </interactant>
    <organismsDiffer>false</organismsDiffer>
    <experiments>3</experiments>
</comment>
<comment type="interaction">
    <interactant intactId="EBI-10317425">
        <id>Q9NZG7</id>
    </interactant>
    <interactant intactId="EBI-13059134">
        <id>Q13520</id>
        <label>AQP6</label>
    </interactant>
    <organismsDiffer>false</organismsDiffer>
    <experiments>3</experiments>
</comment>
<comment type="interaction">
    <interactant intactId="EBI-10317425">
        <id>Q9NZG7</id>
    </interactant>
    <interactant intactId="EBI-11343438">
        <id>Q3SXY8</id>
        <label>ARL13B</label>
    </interactant>
    <organismsDiffer>false</organismsDiffer>
    <experiments>3</experiments>
</comment>
<comment type="interaction">
    <interactant intactId="EBI-10317425">
        <id>Q9NZG7</id>
    </interactant>
    <interactant intactId="EBI-747430">
        <id>Q9BXK5</id>
        <label>BCL2L13</label>
    </interactant>
    <organismsDiffer>false</organismsDiffer>
    <experiments>3</experiments>
</comment>
<comment type="interaction">
    <interactant intactId="EBI-10317425">
        <id>Q9NZG7</id>
    </interactant>
    <interactant intactId="EBI-17953245">
        <id>Q6UXG8-3</id>
        <label>BTNL9</label>
    </interactant>
    <organismsDiffer>false</organismsDiffer>
    <experiments>3</experiments>
</comment>
<comment type="interaction">
    <interactant intactId="EBI-10317425">
        <id>Q9NZG7</id>
    </interactant>
    <interactant intactId="EBI-2836595">
        <id>Q07108</id>
        <label>CD69</label>
    </interactant>
    <organismsDiffer>false</organismsDiffer>
    <experiments>4</experiments>
</comment>
<comment type="interaction">
    <interactant intactId="EBI-10317425">
        <id>Q9NZG7</id>
    </interactant>
    <interactant intactId="EBI-7797864">
        <id>P11912</id>
        <label>CD79A</label>
    </interactant>
    <organismsDiffer>false</organismsDiffer>
    <experiments>3</experiments>
</comment>
<comment type="interaction">
    <interactant intactId="EBI-10317425">
        <id>Q9NZG7</id>
    </interactant>
    <interactant intactId="EBI-12851752">
        <id>P40198</id>
        <label>CEACAM3</label>
    </interactant>
    <organismsDiffer>false</organismsDiffer>
    <experiments>3</experiments>
</comment>
<comment type="interaction">
    <interactant intactId="EBI-10317425">
        <id>Q9NZG7</id>
    </interactant>
    <interactant intactId="EBI-17447707">
        <id>Q9H9P2</id>
        <label>CHODL</label>
    </interactant>
    <organismsDiffer>false</organismsDiffer>
    <experiments>3</experiments>
</comment>
<comment type="interaction">
    <interactant intactId="EBI-10317425">
        <id>Q9NZG7</id>
    </interactant>
    <interactant intactId="EBI-11977093">
        <id>Q6ZS10</id>
        <label>CLEC17A</label>
    </interactant>
    <organismsDiffer>false</organismsDiffer>
    <experiments>3</experiments>
</comment>
<comment type="interaction">
    <interactant intactId="EBI-10317425">
        <id>Q9NZG7</id>
    </interactant>
    <interactant intactId="EBI-3939278">
        <id>Q9BXN2</id>
        <label>CLEC7A</label>
    </interactant>
    <organismsDiffer>false</organismsDiffer>
    <experiments>3</experiments>
</comment>
<comment type="interaction">
    <interactant intactId="EBI-10317425">
        <id>Q9NZG7</id>
    </interactant>
    <interactant intactId="EBI-18013275">
        <id>Q7Z7G2</id>
        <label>CPLX4</label>
    </interactant>
    <organismsDiffer>false</organismsDiffer>
    <experiments>3</experiments>
</comment>
<comment type="interaction">
    <interactant intactId="EBI-10317425">
        <id>Q9NZG7</id>
    </interactant>
    <interactant intactId="EBI-6942903">
        <id>Q96BA8</id>
        <label>CREB3L1</label>
    </interactant>
    <organismsDiffer>false</organismsDiffer>
    <experiments>3</experiments>
</comment>
<comment type="interaction">
    <interactant intactId="EBI-10317425">
        <id>Q9NZG7</id>
    </interactant>
    <interactant intactId="EBI-2680384">
        <id>Q9BQA9</id>
        <label>CYBC1</label>
    </interactant>
    <organismsDiffer>false</organismsDiffer>
    <experiments>3</experiments>
</comment>
<comment type="interaction">
    <interactant intactId="EBI-10317425">
        <id>Q9NZG7</id>
    </interactant>
    <interactant intactId="EBI-3915253">
        <id>Q15125</id>
        <label>EBP</label>
    </interactant>
    <organismsDiffer>false</organismsDiffer>
    <experiments>3</experiments>
</comment>
<comment type="interaction">
    <interactant intactId="EBI-10317425">
        <id>Q9NZG7</id>
    </interactant>
    <interactant intactId="EBI-18535450">
        <id>Q9GZR5</id>
        <label>ELOVL4</label>
    </interactant>
    <organismsDiffer>false</organismsDiffer>
    <experiments>3</experiments>
</comment>
<comment type="interaction">
    <interactant intactId="EBI-10317425">
        <id>Q9NZG7</id>
    </interactant>
    <interactant intactId="EBI-11037623">
        <id>Q9NYP7</id>
        <label>ELOVL5</label>
    </interactant>
    <organismsDiffer>false</organismsDiffer>
    <experiments>3</experiments>
</comment>
<comment type="interaction">
    <interactant intactId="EBI-10317425">
        <id>Q9NZG7</id>
    </interactant>
    <interactant intactId="EBI-17272224">
        <id>O14944</id>
        <label>EREG</label>
    </interactant>
    <organismsDiffer>false</organismsDiffer>
    <experiments>3</experiments>
</comment>
<comment type="interaction">
    <interactant intactId="EBI-10317425">
        <id>Q9NZG7</id>
    </interactant>
    <interactant intactId="EBI-781551">
        <id>Q9Y282</id>
        <label>ERGIC3</label>
    </interactant>
    <organismsDiffer>false</organismsDiffer>
    <experiments>3</experiments>
</comment>
<comment type="interaction">
    <interactant intactId="EBI-10317425">
        <id>Q9NZG7</id>
    </interactant>
    <interactant intactId="EBI-17973325">
        <id>P60508</id>
        <label>ERVFRD-1</label>
    </interactant>
    <organismsDiffer>false</organismsDiffer>
    <experiments>3</experiments>
</comment>
<comment type="interaction">
    <interactant intactId="EBI-10317425">
        <id>Q9NZG7</id>
    </interactant>
    <interactant intactId="EBI-17640610">
        <id>P34910-2</id>
        <label>EVI2B</label>
    </interactant>
    <organismsDiffer>false</organismsDiffer>
    <experiments>3</experiments>
</comment>
<comment type="interaction">
    <interactant intactId="EBI-10317425">
        <id>Q9NZG7</id>
    </interactant>
    <interactant intactId="EBI-18304435">
        <id>Q5JX71</id>
        <label>FAM209A</label>
    </interactant>
    <organismsDiffer>false</organismsDiffer>
    <experiments>3</experiments>
</comment>
<comment type="interaction">
    <interactant intactId="EBI-10317425">
        <id>Q9NZG7</id>
    </interactant>
    <interactant intactId="EBI-18938272">
        <id>Q96KR6</id>
        <label>FAM210B</label>
    </interactant>
    <organismsDiffer>false</organismsDiffer>
    <experiments>3</experiments>
</comment>
<comment type="interaction">
    <interactant intactId="EBI-10317425">
        <id>Q9NZG7</id>
    </interactant>
    <interactant intactId="EBI-2833934">
        <id>P55899</id>
        <label>FCGRT</label>
    </interactant>
    <organismsDiffer>false</organismsDiffer>
    <experiments>3</experiments>
</comment>
<comment type="interaction">
    <interactant intactId="EBI-10317425">
        <id>Q9NZG7</id>
    </interactant>
    <interactant intactId="EBI-4314687">
        <id>Q96PJ5</id>
        <label>FCRL4</label>
    </interactant>
    <organismsDiffer>false</organismsDiffer>
    <experiments>3</experiments>
</comment>
<comment type="interaction">
    <interactant intactId="EBI-10317425">
        <id>Q9NZG7</id>
    </interactant>
    <interactant intactId="EBI-12142257">
        <id>Q8TBE3</id>
        <label>FNDC9</label>
    </interactant>
    <organismsDiffer>false</organismsDiffer>
    <experiments>3</experiments>
</comment>
<comment type="interaction">
    <interactant intactId="EBI-10317425">
        <id>Q9NZG7</id>
    </interactant>
    <interactant intactId="EBI-1103439">
        <id>P17302</id>
        <label>GJA1</label>
    </interactant>
    <organismsDiffer>false</organismsDiffer>
    <experiments>3</experiments>
</comment>
<comment type="interaction">
    <interactant intactId="EBI-10317425">
        <id>Q9NZG7</id>
    </interactant>
    <interactant intactId="EBI-13345167">
        <id>Q8TDT2</id>
        <label>GPR152</label>
    </interactant>
    <organismsDiffer>false</organismsDiffer>
    <experiments>3</experiments>
</comment>
<comment type="interaction">
    <interactant intactId="EBI-10317425">
        <id>Q9NZG7</id>
    </interactant>
    <interactant intactId="EBI-18076404">
        <id>O15529</id>
        <label>GPR42</label>
    </interactant>
    <organismsDiffer>false</organismsDiffer>
    <experiments>3</experiments>
</comment>
<comment type="interaction">
    <interactant intactId="EBI-10317425">
        <id>Q9NZG7</id>
    </interactant>
    <interactant intactId="EBI-725421">
        <id>P32942</id>
        <label>ICAM3</label>
    </interactant>
    <organismsDiffer>false</organismsDiffer>
    <experiments>3</experiments>
</comment>
<comment type="interaction">
    <interactant intactId="EBI-10317425">
        <id>Q9NZG7</id>
    </interactant>
    <interactant intactId="EBI-1030755">
        <id>P15260</id>
        <label>IFNGR1</label>
    </interactant>
    <organismsDiffer>false</organismsDiffer>
    <experiments>3</experiments>
</comment>
<comment type="interaction">
    <interactant intactId="EBI-10317425">
        <id>Q9NZG7</id>
    </interactant>
    <interactant intactId="EBI-1757512">
        <id>P26951</id>
        <label>IL3RA</label>
    </interactant>
    <organismsDiffer>false</organismsDiffer>
    <experiments>3</experiments>
</comment>
<comment type="interaction">
    <interactant intactId="EBI-10317425">
        <id>Q9NZG7</id>
    </interactant>
    <interactant intactId="EBI-10266796">
        <id>Q8N5M9</id>
        <label>JAGN1</label>
    </interactant>
    <organismsDiffer>false</organismsDiffer>
    <experiments>3</experiments>
</comment>
<comment type="interaction">
    <interactant intactId="EBI-10317425">
        <id>Q9NZG7</id>
    </interactant>
    <interactant intactId="EBI-12017638">
        <id>P48051</id>
        <label>KCNJ6</label>
    </interactant>
    <organismsDiffer>false</organismsDiffer>
    <experiments>3</experiments>
</comment>
<comment type="interaction">
    <interactant intactId="EBI-10317425">
        <id>Q9NZG7</id>
    </interactant>
    <interactant intactId="EBI-8632435">
        <id>P43628</id>
        <label>KIR2DL3</label>
    </interactant>
    <organismsDiffer>false</organismsDiffer>
    <experiments>3</experiments>
</comment>
<comment type="interaction">
    <interactant intactId="EBI-10317425">
        <id>Q9NZG7</id>
    </interactant>
    <interactant intactId="EBI-17272405">
        <id>Q8N743</id>
        <label>KIR3DL3</label>
    </interactant>
    <organismsDiffer>false</organismsDiffer>
    <experiments>3</experiments>
</comment>
<comment type="interaction">
    <interactant intactId="EBI-10317425">
        <id>Q9NZG7</id>
    </interactant>
    <interactant intactId="EBI-10173166">
        <id>Q5T700</id>
        <label>LDLRAD1</label>
    </interactant>
    <organismsDiffer>false</organismsDiffer>
    <experiments>3</experiments>
</comment>
<comment type="interaction">
    <interactant intactId="EBI-10317425">
        <id>Q9NZG7</id>
    </interactant>
    <interactant intactId="EBI-2820517">
        <id>Q8TAF8</id>
        <label>LHFPL5</label>
    </interactant>
    <organismsDiffer>false</organismsDiffer>
    <experiments>3</experiments>
</comment>
<comment type="interaction">
    <interactant intactId="EBI-10317425">
        <id>Q9NZG7</id>
    </interactant>
    <interactant intactId="EBI-17200970">
        <id>Q6UWN5</id>
        <label>LYPD5</label>
    </interactant>
    <organismsDiffer>false</organismsDiffer>
    <experiments>3</experiments>
</comment>
<comment type="interaction">
    <interactant intactId="EBI-10317425">
        <id>Q9NZG7</id>
    </interactant>
    <interactant intactId="EBI-10329546">
        <id>Q9Y5Y7</id>
        <label>LYVE1</label>
    </interactant>
    <organismsDiffer>false</organismsDiffer>
    <experiments>3</experiments>
</comment>
<comment type="interaction">
    <interactant intactId="EBI-10317425">
        <id>Q9NZG7</id>
    </interactant>
    <interactant intactId="EBI-2907262">
        <id>P20645</id>
        <label>M6PR</label>
    </interactant>
    <organismsDiffer>false</organismsDiffer>
    <experiments>3</experiments>
</comment>
<comment type="interaction">
    <interactant intactId="EBI-10317425">
        <id>Q9NZG7</id>
    </interactant>
    <interactant intactId="EBI-724754">
        <id>O14880</id>
        <label>MGST3</label>
    </interactant>
    <organismsDiffer>false</organismsDiffer>
    <experiments>3</experiments>
</comment>
<comment type="interaction">
    <interactant intactId="EBI-10317425">
        <id>Q9NZG7</id>
    </interactant>
    <interactant intactId="EBI-6163737">
        <id>Q8N4V1</id>
        <label>MMGT1</label>
    </interactant>
    <organismsDiffer>false</organismsDiffer>
    <experiments>3</experiments>
</comment>
<comment type="interaction">
    <interactant intactId="EBI-10317425">
        <id>Q9NZG7</id>
    </interactant>
    <interactant intactId="EBI-12201447">
        <id>Q95460-2</id>
        <label>MR1</label>
    </interactant>
    <organismsDiffer>false</organismsDiffer>
    <experiments>3</experiments>
</comment>
<comment type="interaction">
    <interactant intactId="EBI-10317425">
        <id>Q9NZG7</id>
    </interactant>
    <interactant intactId="EBI-17263240">
        <id>P15941-11</id>
        <label>MUC1</label>
    </interactant>
    <organismsDiffer>false</organismsDiffer>
    <experiments>3</experiments>
</comment>
<comment type="interaction">
    <interactant intactId="EBI-10317425">
        <id>Q9NZG7</id>
    </interactant>
    <interactant intactId="EBI-12382569">
        <id>Q2M2E3</id>
        <label>ODF4</label>
    </interactant>
    <organismsDiffer>false</organismsDiffer>
    <experiments>3</experiments>
</comment>
<comment type="interaction">
    <interactant intactId="EBI-10317425">
        <id>Q9NZG7</id>
    </interactant>
    <interactant intactId="EBI-17630288">
        <id>P57054</id>
        <label>PIGP</label>
    </interactant>
    <organismsDiffer>false</organismsDiffer>
    <experiments>3</experiments>
</comment>
<comment type="interaction">
    <interactant intactId="EBI-10317425">
        <id>Q9NZG7</id>
    </interactant>
    <interactant intactId="EBI-3919694">
        <id>P15151</id>
        <label>PVR</label>
    </interactant>
    <organismsDiffer>false</organismsDiffer>
    <experiments>3</experiments>
</comment>
<comment type="interaction">
    <interactant intactId="EBI-10317425">
        <id>Q9NZG7</id>
    </interactant>
    <interactant intactId="EBI-12375429">
        <id>Q7Z5B4-5</id>
        <label>RIC3</label>
    </interactant>
    <organismsDiffer>false</organismsDiffer>
    <experiments>3</experiments>
</comment>
<comment type="interaction">
    <interactant intactId="EBI-10317425">
        <id>Q9NZG7</id>
    </interactant>
    <interactant intactId="EBI-18397230">
        <id>Q6P5S7</id>
        <label>RNASEK</label>
    </interactant>
    <organismsDiffer>false</organismsDiffer>
    <experiments>3</experiments>
</comment>
<comment type="interaction">
    <interactant intactId="EBI-10317425">
        <id>Q9NZG7</id>
    </interactant>
    <interactant intactId="EBI-17247926">
        <id>Q9NY72</id>
        <label>SCN3B</label>
    </interactant>
    <organismsDiffer>false</organismsDiffer>
    <experiments>3</experiments>
</comment>
<comment type="interaction">
    <interactant intactId="EBI-10317425">
        <id>Q9NZG7</id>
    </interactant>
    <interactant intactId="EBI-18164173">
        <id>Q9P0V8</id>
        <label>SLAMF8</label>
    </interactant>
    <organismsDiffer>false</organismsDiffer>
    <experiments>3</experiments>
</comment>
<comment type="interaction">
    <interactant intactId="EBI-10317425">
        <id>Q9NZG7</id>
    </interactant>
    <interactant intactId="EBI-3923031">
        <id>Q14973</id>
        <label>SLC10A1</label>
    </interactant>
    <organismsDiffer>false</organismsDiffer>
    <experiments>3</experiments>
</comment>
<comment type="interaction">
    <interactant intactId="EBI-10317425">
        <id>Q9NZG7</id>
    </interactant>
    <interactant intactId="EBI-18159983">
        <id>Q3KNW5</id>
        <label>SLC10A6</label>
    </interactant>
    <organismsDiffer>false</organismsDiffer>
    <experiments>3</experiments>
</comment>
<comment type="interaction">
    <interactant intactId="EBI-10317425">
        <id>Q9NZG7</id>
    </interactant>
    <interactant intactId="EBI-12889586">
        <id>Q6ZP29-3</id>
        <label>SLC66A1</label>
    </interactant>
    <organismsDiffer>false</organismsDiffer>
    <experiments>3</experiments>
</comment>
<comment type="interaction">
    <interactant intactId="EBI-10317425">
        <id>Q9NZG7</id>
    </interactant>
    <interactant intactId="EBI-5235586">
        <id>Q8TBB6</id>
        <label>SLC7A14</label>
    </interactant>
    <organismsDiffer>false</organismsDiffer>
    <experiments>3</experiments>
</comment>
<comment type="interaction">
    <interactant intactId="EBI-10317425">
        <id>Q9NZG7</id>
    </interactant>
    <interactant intactId="EBI-13292283">
        <id>Q9UHI5</id>
        <label>SLC7A8</label>
    </interactant>
    <organismsDiffer>false</organismsDiffer>
    <experiments>3</experiments>
</comment>
<comment type="interaction">
    <interactant intactId="EBI-10317425">
        <id>Q9NZG7</id>
    </interactant>
    <interactant intactId="EBI-712466">
        <id>Q16623</id>
        <label>STX1A</label>
    </interactant>
    <organismsDiffer>false</organismsDiffer>
    <experiments>3</experiments>
</comment>
<comment type="interaction">
    <interactant intactId="EBI-10317425">
        <id>Q9NZG7</id>
    </interactant>
    <interactant intactId="EBI-11956649">
        <id>P32856-2</id>
        <label>STX2</label>
    </interactant>
    <organismsDiffer>false</organismsDiffer>
    <experiments>3</experiments>
</comment>
<comment type="interaction">
    <interactant intactId="EBI-10317425">
        <id>Q9NZG7</id>
    </interactant>
    <interactant intactId="EBI-1805798">
        <id>Q53R12</id>
        <label>TM4SF20</label>
    </interactant>
    <organismsDiffer>false</organismsDiffer>
    <experiments>3</experiments>
</comment>
<comment type="interaction">
    <interactant intactId="EBI-10317425">
        <id>Q9NZG7</id>
    </interactant>
    <interactant intactId="EBI-3922699">
        <id>Q96IK0</id>
        <label>TMEM101</label>
    </interactant>
    <organismsDiffer>false</organismsDiffer>
    <experiments>3</experiments>
</comment>
<comment type="interaction">
    <interactant intactId="EBI-10317425">
        <id>Q9NZG7</id>
    </interactant>
    <interactant intactId="EBI-7238458">
        <id>Q8IV31</id>
        <label>TMEM139</label>
    </interactant>
    <organismsDiffer>false</organismsDiffer>
    <experiments>3</experiments>
</comment>
<comment type="interaction">
    <interactant intactId="EBI-10317425">
        <id>Q9NZG7</id>
    </interactant>
    <interactant intactId="EBI-8638294">
        <id>Q9NUH8</id>
        <label>TMEM14B</label>
    </interactant>
    <organismsDiffer>false</organismsDiffer>
    <experiments>3</experiments>
</comment>
<comment type="interaction">
    <interactant intactId="EBI-10317425">
        <id>Q9NZG7</id>
    </interactant>
    <interactant intactId="EBI-726044">
        <id>Q9NW97</id>
        <label>TMEM51</label>
    </interactant>
    <organismsDiffer>false</organismsDiffer>
    <experiments>3</experiments>
</comment>
<comment type="interaction">
    <interactant intactId="EBI-10317425">
        <id>Q9NZG7</id>
    </interactant>
    <interactant intactId="EBI-18178701">
        <id>Q4KMG9</id>
        <label>TMEM52B</label>
    </interactant>
    <organismsDiffer>false</organismsDiffer>
    <experiments>3</experiments>
</comment>
<comment type="interaction">
    <interactant intactId="EBI-10317425">
        <id>Q9NZG7</id>
    </interactant>
    <interactant intactId="EBI-2548832">
        <id>Q8N661</id>
        <label>TMEM86B</label>
    </interactant>
    <organismsDiffer>false</organismsDiffer>
    <experiments>3</experiments>
</comment>
<comment type="interaction">
    <interactant intactId="EBI-10317425">
        <id>Q9NZG7</id>
    </interactant>
    <interactant intactId="EBI-723976">
        <id>Q9P0T7</id>
        <label>TMEM9</label>
    </interactant>
    <organismsDiffer>false</organismsDiffer>
    <experiments>3</experiments>
</comment>
<comment type="interaction">
    <interactant intactId="EBI-10317425">
        <id>Q9NZG7</id>
    </interactant>
    <interactant intactId="EBI-12345267">
        <id>O15393-2</id>
        <label>TMPRSS2</label>
    </interactant>
    <organismsDiffer>false</organismsDiffer>
    <experiments>3</experiments>
</comment>
<comment type="interaction">
    <interactant intactId="EBI-10317425">
        <id>Q9NZG7</id>
    </interactant>
    <interactant intactId="EBI-6447886">
        <id>Q9Y320</id>
        <label>TMX2</label>
    </interactant>
    <organismsDiffer>false</organismsDiffer>
    <experiments>3</experiments>
</comment>
<comment type="interaction">
    <interactant intactId="EBI-10317425">
        <id>Q9NZG7</id>
    </interactant>
    <interactant intactId="EBI-2466403">
        <id>O95859</id>
        <label>TSPAN12</label>
    </interactant>
    <organismsDiffer>false</organismsDiffer>
    <experiments>3</experiments>
</comment>
<comment type="interaction">
    <interactant intactId="EBI-10317425">
        <id>Q9NZG7</id>
    </interactant>
    <interactant intactId="EBI-1055364">
        <id>Q3ZAQ7</id>
        <label>VMA21</label>
    </interactant>
    <organismsDiffer>false</organismsDiffer>
    <experiments>3</experiments>
</comment>
<comment type="interaction">
    <interactant intactId="EBI-10317425">
        <id>Q9NZG7</id>
    </interactant>
    <interactant intactId="EBI-18323486">
        <id>Q86XK7</id>
        <label>VSIG1</label>
    </interactant>
    <organismsDiffer>false</organismsDiffer>
    <experiments>3</experiments>
</comment>
<comment type="subcellular location">
    <subcellularLocation>
        <location evidence="5 8 9">Cell membrane</location>
        <topology evidence="5">Multi-pass membrane protein</topology>
    </subcellularLocation>
</comment>
<comment type="tissue specificity">
    <text evidence="2">Widely expressed. In adult, higher expression in the bone marrow and peripheral blood lymphocytes, medium in the lung, lymph node, thyroid, uterus, thymus, spleen, prostate and skeletal muscle, lower in the liver, placenta, brain, heart and kidney. In embryo, higher expression in the thymus, heart and liver, lower in the spleen, lung, brain and kidney.</text>
</comment>
<comment type="induction">
    <text evidence="2">By nerve injury; in Schwann cells.</text>
</comment>
<comment type="domain">
    <text evidence="4 5">Composed of 4 alpha helices: 2 hydrophobic transmembrane regions (alpha3 and alpha4) and 2 alpha helices (alpha1 and alpha2) (PubMed:39667936). Alpha1 and alpha2 feature one hydrophobic side and a hydrophilic side (PubMed:39667936). In contrast to NINJ1, does not disrupt membrane integrity (PubMed:38614101, PubMed:39667936). NINJ2 filaments are curved toward the intracellular space due to cholesterol-binding, preventing circularization and ability to mediate plasma membrane rupture (PubMed:39667936).</text>
</comment>
<comment type="similarity">
    <text evidence="7">Belongs to the ninjurin family.</text>
</comment>
<comment type="sequence caution" evidence="7">
    <conflict type="erroneous initiation">
        <sequence resource="EMBL-CDS" id="AAH57766"/>
    </conflict>
    <text>Extended N-terminus.</text>
</comment>
<proteinExistence type="evidence at protein level"/>
<accession>Q9NZG7</accession>
<dbReference type="EMBL" id="AF205633">
    <property type="protein sequence ID" value="AAF42828.1"/>
    <property type="molecule type" value="mRNA"/>
</dbReference>
<dbReference type="EMBL" id="BC057766">
    <property type="protein sequence ID" value="AAH57766.2"/>
    <property type="status" value="ALT_INIT"/>
    <property type="molecule type" value="mRNA"/>
</dbReference>
<dbReference type="CCDS" id="CCDS8505.2"/>
<dbReference type="RefSeq" id="NP_001281274.1">
    <property type="nucleotide sequence ID" value="NM_001294345.1"/>
</dbReference>
<dbReference type="RefSeq" id="NP_001281275.1">
    <property type="nucleotide sequence ID" value="NM_001294346.1"/>
</dbReference>
<dbReference type="RefSeq" id="NP_057617.2">
    <property type="nucleotide sequence ID" value="NM_016533.5"/>
</dbReference>
<dbReference type="PDB" id="8SZB">
    <property type="method" value="EM"/>
    <property type="resolution" value="3.07 A"/>
    <property type="chains" value="A/B/C/D/E/F=2-142"/>
</dbReference>
<dbReference type="PDBsum" id="8SZB"/>
<dbReference type="EMDB" id="EMD-40907"/>
<dbReference type="SMR" id="Q9NZG7"/>
<dbReference type="BioGRID" id="110880">
    <property type="interactions" value="80"/>
</dbReference>
<dbReference type="FunCoup" id="Q9NZG7">
    <property type="interactions" value="490"/>
</dbReference>
<dbReference type="IntAct" id="Q9NZG7">
    <property type="interactions" value="72"/>
</dbReference>
<dbReference type="STRING" id="9606.ENSP00000499548"/>
<dbReference type="iPTMnet" id="Q9NZG7"/>
<dbReference type="PhosphoSitePlus" id="Q9NZG7"/>
<dbReference type="SwissPalm" id="Q9NZG7"/>
<dbReference type="BioMuta" id="NINJ2"/>
<dbReference type="DMDM" id="18203328"/>
<dbReference type="jPOST" id="Q9NZG7"/>
<dbReference type="MassIVE" id="Q9NZG7"/>
<dbReference type="PaxDb" id="9606-ENSP00000307552"/>
<dbReference type="PeptideAtlas" id="Q9NZG7"/>
<dbReference type="ProteomicsDB" id="83384"/>
<dbReference type="Antibodypedia" id="22080">
    <property type="antibodies" value="90 antibodies from 16 providers"/>
</dbReference>
<dbReference type="DNASU" id="4815"/>
<dbReference type="Ensembl" id="ENST00000305108.10">
    <property type="protein sequence ID" value="ENSP00000307552.5"/>
    <property type="gene ID" value="ENSG00000171840.13"/>
</dbReference>
<dbReference type="GeneID" id="4815"/>
<dbReference type="KEGG" id="hsa:4815"/>
<dbReference type="MANE-Select" id="ENST00000305108.10">
    <property type="protein sequence ID" value="ENSP00000307552.5"/>
    <property type="RefSeq nucleotide sequence ID" value="NM_016533.6"/>
    <property type="RefSeq protein sequence ID" value="NP_057617.3"/>
</dbReference>
<dbReference type="UCSC" id="uc001qil.4">
    <property type="organism name" value="human"/>
</dbReference>
<dbReference type="AGR" id="HGNC:7825"/>
<dbReference type="CTD" id="4815"/>
<dbReference type="DisGeNET" id="4815"/>
<dbReference type="GeneCards" id="NINJ2"/>
<dbReference type="HGNC" id="HGNC:7825">
    <property type="gene designation" value="NINJ2"/>
</dbReference>
<dbReference type="HPA" id="ENSG00000171840">
    <property type="expression patterns" value="Tissue enhanced (brain)"/>
</dbReference>
<dbReference type="MIM" id="607297">
    <property type="type" value="gene"/>
</dbReference>
<dbReference type="neXtProt" id="NX_Q9NZG7"/>
<dbReference type="OpenTargets" id="ENSG00000171840"/>
<dbReference type="PharmGKB" id="PA31632"/>
<dbReference type="VEuPathDB" id="HostDB:ENSG00000171840"/>
<dbReference type="eggNOG" id="ENOG502S2EJ">
    <property type="taxonomic scope" value="Eukaryota"/>
</dbReference>
<dbReference type="GeneTree" id="ENSGT00940000158219"/>
<dbReference type="HOGENOM" id="CLU_093971_1_0_1"/>
<dbReference type="InParanoid" id="Q9NZG7"/>
<dbReference type="OrthoDB" id="6114058at2759"/>
<dbReference type="PAN-GO" id="Q9NZG7">
    <property type="GO annotations" value="1 GO annotation based on evolutionary models"/>
</dbReference>
<dbReference type="PhylomeDB" id="Q9NZG7"/>
<dbReference type="TreeFam" id="TF323538"/>
<dbReference type="PathwayCommons" id="Q9NZG7"/>
<dbReference type="SignaLink" id="Q9NZG7"/>
<dbReference type="BioGRID-ORCS" id="4815">
    <property type="hits" value="11 hits in 1152 CRISPR screens"/>
</dbReference>
<dbReference type="CD-CODE" id="FB4E32DD">
    <property type="entry name" value="Presynaptic clusters and postsynaptic densities"/>
</dbReference>
<dbReference type="ChiTaRS" id="NINJ2">
    <property type="organism name" value="human"/>
</dbReference>
<dbReference type="GenomeRNAi" id="4815"/>
<dbReference type="Pharos" id="Q9NZG7">
    <property type="development level" value="Tbio"/>
</dbReference>
<dbReference type="PRO" id="PR:Q9NZG7"/>
<dbReference type="Proteomes" id="UP000005640">
    <property type="component" value="Chromosome 12"/>
</dbReference>
<dbReference type="RNAct" id="Q9NZG7">
    <property type="molecule type" value="protein"/>
</dbReference>
<dbReference type="Bgee" id="ENSG00000171840">
    <property type="expression patterns" value="Expressed in blood and 141 other cell types or tissues"/>
</dbReference>
<dbReference type="ExpressionAtlas" id="Q9NZG7">
    <property type="expression patterns" value="baseline and differential"/>
</dbReference>
<dbReference type="GO" id="GO:0005886">
    <property type="term" value="C:plasma membrane"/>
    <property type="evidence" value="ECO:0000314"/>
    <property type="project" value="UniProtKB"/>
</dbReference>
<dbReference type="GO" id="GO:0015485">
    <property type="term" value="F:cholesterol binding"/>
    <property type="evidence" value="ECO:0000314"/>
    <property type="project" value="UniProtKB"/>
</dbReference>
<dbReference type="GO" id="GO:0007155">
    <property type="term" value="P:cell adhesion"/>
    <property type="evidence" value="ECO:0000318"/>
    <property type="project" value="GO_Central"/>
</dbReference>
<dbReference type="GO" id="GO:0007399">
    <property type="term" value="P:nervous system development"/>
    <property type="evidence" value="ECO:0000304"/>
    <property type="project" value="ProtInc"/>
</dbReference>
<dbReference type="GO" id="GO:0007158">
    <property type="term" value="P:neuron cell-cell adhesion"/>
    <property type="evidence" value="ECO:0000304"/>
    <property type="project" value="ProtInc"/>
</dbReference>
<dbReference type="GO" id="GO:0042246">
    <property type="term" value="P:tissue regeneration"/>
    <property type="evidence" value="ECO:0007669"/>
    <property type="project" value="InterPro"/>
</dbReference>
<dbReference type="InterPro" id="IPR007007">
    <property type="entry name" value="Ninjurin"/>
</dbReference>
<dbReference type="PANTHER" id="PTHR12316:SF24">
    <property type="entry name" value="NINJURIN-2"/>
    <property type="match status" value="1"/>
</dbReference>
<dbReference type="PANTHER" id="PTHR12316">
    <property type="entry name" value="NINJURIN-RELATED"/>
    <property type="match status" value="1"/>
</dbReference>
<dbReference type="Pfam" id="PF04923">
    <property type="entry name" value="Ninjurin"/>
    <property type="match status" value="1"/>
</dbReference>
<sequence>MESARENIDLQPGSSDPRSQPINLNHYATKKSVAESMLDVALFMSNAMRLKAVLEQGPSSHYYTTLVTLISLSLLLQVVIGVLLVVIARLNLNEVEKQWRLNQLNNAATILVFFTVVINVFITAFGAHKTGFLAARASRNPL</sequence>
<name>NINJ2_HUMAN</name>
<protein>
    <recommendedName>
        <fullName evidence="6">Ninjurin-2</fullName>
    </recommendedName>
    <alternativeName>
        <fullName>Nerve injury-induced protein 2</fullName>
    </alternativeName>
</protein>
<keyword id="KW-0002">3D-structure</keyword>
<keyword id="KW-0130">Cell adhesion</keyword>
<keyword id="KW-1003">Cell membrane</keyword>
<keyword id="KW-0472">Membrane</keyword>
<keyword id="KW-1267">Proteomics identification</keyword>
<keyword id="KW-1185">Reference proteome</keyword>
<keyword id="KW-0812">Transmembrane</keyword>
<keyword id="KW-1133">Transmembrane helix</keyword>
<reference key="1">
    <citation type="journal article" date="2000" name="J. Neurosci.">
        <title>Ninjurin2, a novel homophilic adhesion molecule, is expressed in mature sensory and enteric neurons and promotes neurite outgrowth.</title>
        <authorList>
            <person name="Araki T."/>
            <person name="Milbrandt J."/>
        </authorList>
    </citation>
    <scope>NUCLEOTIDE SEQUENCE [MRNA]</scope>
    <scope>FUNCTION</scope>
    <scope>SUBCELLULAR LOCATION</scope>
    <scope>TISSUE SPECIFICITY</scope>
    <scope>INDUCTION</scope>
    <source>
        <tissue>Brain</tissue>
    </source>
</reference>
<reference key="2">
    <citation type="journal article" date="2004" name="Genome Res.">
        <title>The status, quality, and expansion of the NIH full-length cDNA project: the Mammalian Gene Collection (MGC).</title>
        <authorList>
            <consortium name="The MGC Project Team"/>
        </authorList>
    </citation>
    <scope>NUCLEOTIDE SEQUENCE [LARGE SCALE MRNA]</scope>
    <source>
        <tissue>Brain</tissue>
    </source>
</reference>
<reference key="3">
    <citation type="journal article" date="2021" name="Nature">
        <title>NINJ1 mediates plasma membrane rupture during lytic cell death.</title>
        <authorList>
            <person name="Kayagaki N."/>
            <person name="Kornfeld O.S."/>
            <person name="Lee B.L."/>
            <person name="Stowe I.B."/>
            <person name="O'Rourke K."/>
            <person name="Li Q."/>
            <person name="Sandoval W."/>
            <person name="Yan D."/>
            <person name="Kang J."/>
            <person name="Xu M."/>
            <person name="Zhang J."/>
            <person name="Lee W.P."/>
            <person name="McKenzie B.S."/>
            <person name="Ulas G."/>
            <person name="Payandeh J."/>
            <person name="Roose-Girma M."/>
            <person name="Modrusan Z."/>
            <person name="Reja R."/>
            <person name="Sagolla M."/>
            <person name="Webster J.D."/>
            <person name="Cho V."/>
            <person name="Andrews T.D."/>
            <person name="Morris L.X."/>
            <person name="Miosge L.A."/>
            <person name="Goodnow C.C."/>
            <person name="Bertram E.M."/>
            <person name="Dixit V.M."/>
        </authorList>
    </citation>
    <scope>FUNCTION</scope>
</reference>
<reference key="4">
    <citation type="journal article" date="2024" name="Cell">
        <title>NINJ1 mediates plasma membrane rupture by cutting and releasing membrane disks.</title>
        <authorList>
            <person name="David L."/>
            <person name="Borges J.P."/>
            <person name="Hollingsworth L.R."/>
            <person name="Volchuk A."/>
            <person name="Jansen I."/>
            <person name="Garlick E."/>
            <person name="Steinberg B.E."/>
            <person name="Wu H."/>
        </authorList>
    </citation>
    <scope>FUNCTION</scope>
    <scope>SUBUNIT</scope>
    <scope>SUBCELLULAR LOCATION</scope>
    <scope>DOMAIN</scope>
    <scope>MUTAGENESIS OF VAL-86; GLN-103; ILE-110 AND PHE-114</scope>
</reference>
<reference evidence="11" key="5">
    <citation type="journal article" date="2024" name="Cell">
        <title>How NINJ1 mediates plasma membrane rupture and why NINJ2 cannot.</title>
        <authorList>
            <person name="Sahoo B."/>
            <person name="Mou Z."/>
            <person name="Liu W."/>
            <person name="Dubyak G."/>
            <person name="Dai X."/>
        </authorList>
    </citation>
    <scope>STRUCTURE BY ELECTRON MICROSCOPY (3.07 ANGSTROMS) OF 2-142 IN COMPLEX WITH CHOLESTEROL</scope>
    <scope>FUNCTION</scope>
    <scope>SUBUNIT</scope>
    <scope>SUBCELLULAR LOCATION</scope>
    <scope>DOMAIN</scope>
    <scope>MUTAGENESIS OF 62-TYR--THR-68; VAL-79; VAL-86; TRP-99; GLN-103; ALA-107 AND ILE-110</scope>
</reference>
<feature type="chain" id="PRO_0000159646" description="Ninjurin-2">
    <location>
        <begin position="1"/>
        <end position="142"/>
    </location>
</feature>
<feature type="topological domain" description="Extracellular" evidence="5 11">
    <location>
        <begin position="1"/>
        <end position="60"/>
    </location>
</feature>
<feature type="transmembrane region" description="Helical; Name=Helix alpha3" evidence="5 11">
    <location>
        <begin position="61"/>
        <end position="92"/>
    </location>
</feature>
<feature type="topological domain" description="Cytoplasmic" evidence="5 11">
    <location>
        <begin position="93"/>
        <end position="96"/>
    </location>
</feature>
<feature type="transmembrane region" description="Helical;Name=Helix alpha4" evidence="5 11">
    <location>
        <begin position="97"/>
        <end position="126"/>
    </location>
</feature>
<feature type="topological domain" description="Extracellular" evidence="5 11">
    <location>
        <begin position="127"/>
        <end position="142"/>
    </location>
</feature>
<feature type="region of interest" description="Disordered" evidence="1">
    <location>
        <begin position="1"/>
        <end position="21"/>
    </location>
</feature>
<feature type="region of interest" description="Helix alpha1" evidence="5 11">
    <location>
        <begin position="25"/>
        <end position="37"/>
    </location>
</feature>
<feature type="region of interest" description="Helix alpha2" evidence="5 11">
    <location>
        <begin position="38"/>
        <end position="57"/>
    </location>
</feature>
<feature type="compositionally biased region" description="Polar residues" evidence="1">
    <location>
        <begin position="12"/>
        <end position="21"/>
    </location>
</feature>
<feature type="binding site" evidence="5 11">
    <location>
        <position position="103"/>
    </location>
    <ligand>
        <name>cholesterol</name>
        <dbReference type="ChEBI" id="CHEBI:16113"/>
    </ligand>
</feature>
<feature type="mutagenesis site" description="In mutant M9 + W99A; induces ability to mediate plama membrane rupture; when associated with G-79, F-86, A-99, F-103, L-107 and G-110." evidence="5">
    <original>YYTTLVT</original>
    <variation>FYVPLVV</variation>
    <location>
        <begin position="62"/>
        <end position="68"/>
    </location>
</feature>
<feature type="mutagenesis site" description="In mutant M9 + W99A; induces ability to mediate plama membrane rupture; when associated with 62-F--V-68, F-86, A-99, F-103, L-107 and G-110." evidence="5">
    <original>V</original>
    <variation>G</variation>
    <location>
        <position position="79"/>
    </location>
</feature>
<feature type="mutagenesis site" description="Promotes slight ability to mediate plasma membrane rupture. In mutant M9 + W99A; induces ability to mediate plama membrane rupture; when associated with 62-F--V-68, G-79, A-99, F-103, L-107 and G-110." evidence="4 5">
    <original>V</original>
    <variation>F</variation>
    <location>
        <position position="86"/>
    </location>
</feature>
<feature type="mutagenesis site" description="In mutant M9 + W99A; induces ability to mediate plama membrane rupture; when associated with 62-F--V-68, G-79, F-86, F-103, L-107 and G-110." evidence="5">
    <original>W</original>
    <variation>A</variation>
    <location>
        <position position="99"/>
    </location>
</feature>
<feature type="mutagenesis site" description="Promotes ability to mediate plasma membrane rupture. In mutant M9 + W99A; induces ability to mediate plama membrane rupture; when associated with 62-F--V-68, G-79, F-86, A-99, L-107 and G-110." evidence="4 5">
    <original>Q</original>
    <variation>F</variation>
    <location>
        <position position="103"/>
    </location>
</feature>
<feature type="mutagenesis site" description="In mutant M9 + W99A; induces ability to mediate plama membrane rupture; when associated with 62-F--V-68, G-79, F-86, A-99, F-103 and G-110." evidence="5">
    <original>A</original>
    <variation>L</variation>
    <location>
        <position position="107"/>
    </location>
</feature>
<feature type="mutagenesis site" description="Promotes ability to mediate plasma membrane rupture. In mutant M9 + W99A; induces ability to mediate plama membrane rupture; when associated with 62-F--V-68, G-79, F-86, A-99, F-103 and L-107." evidence="4 5">
    <original>I</original>
    <variation>G</variation>
    <location>
        <position position="110"/>
    </location>
</feature>
<feature type="mutagenesis site" description="Promotes ability to mediate plasma membrane rupture." evidence="4">
    <original>F</original>
    <variation>I</variation>
    <location>
        <position position="114"/>
    </location>
</feature>
<feature type="helix" evidence="12">
    <location>
        <begin position="27"/>
        <end position="36"/>
    </location>
</feature>
<feature type="helix" evidence="12">
    <location>
        <begin position="40"/>
        <end position="56"/>
    </location>
</feature>
<feature type="helix" evidence="12">
    <location>
        <begin position="63"/>
        <end position="93"/>
    </location>
</feature>
<feature type="helix" evidence="12">
    <location>
        <begin position="99"/>
        <end position="125"/>
    </location>
</feature>